<comment type="function">
    <text evidence="1">Catalyzes the hydroxylation of L-kynurenine (L-Kyn) to form 3-hydroxy-L-kynurenine (L-3OHKyn). Required for synthesis of quinolinic acid.</text>
</comment>
<comment type="catalytic activity">
    <reaction evidence="1">
        <text>L-kynurenine + NADPH + O2 + H(+) = 3-hydroxy-L-kynurenine + NADP(+) + H2O</text>
        <dbReference type="Rhea" id="RHEA:20545"/>
        <dbReference type="ChEBI" id="CHEBI:15377"/>
        <dbReference type="ChEBI" id="CHEBI:15378"/>
        <dbReference type="ChEBI" id="CHEBI:15379"/>
        <dbReference type="ChEBI" id="CHEBI:57783"/>
        <dbReference type="ChEBI" id="CHEBI:57959"/>
        <dbReference type="ChEBI" id="CHEBI:58125"/>
        <dbReference type="ChEBI" id="CHEBI:58349"/>
        <dbReference type="EC" id="1.14.13.9"/>
    </reaction>
</comment>
<comment type="cofactor">
    <cofactor evidence="1">
        <name>FAD</name>
        <dbReference type="ChEBI" id="CHEBI:57692"/>
    </cofactor>
</comment>
<comment type="pathway">
    <text evidence="1">Cofactor biosynthesis; NAD(+) biosynthesis; quinolinate from L-kynurenine: step 1/3.</text>
</comment>
<comment type="similarity">
    <text evidence="1">Belongs to the aromatic-ring hydroxylase family. KMO subfamily.</text>
</comment>
<evidence type="ECO:0000255" key="1">
    <source>
        <dbReference type="HAMAP-Rule" id="MF_01971"/>
    </source>
</evidence>
<feature type="chain" id="PRO_0000361939" description="Kynurenine 3-monooxygenase">
    <location>
        <begin position="1"/>
        <end position="449"/>
    </location>
</feature>
<proteinExistence type="inferred from homology"/>
<keyword id="KW-0274">FAD</keyword>
<keyword id="KW-0285">Flavoprotein</keyword>
<keyword id="KW-0503">Monooxygenase</keyword>
<keyword id="KW-0521">NADP</keyword>
<keyword id="KW-0560">Oxidoreductase</keyword>
<keyword id="KW-0662">Pyridine nucleotide biosynthesis</keyword>
<gene>
    <name evidence="1" type="primary">kmo</name>
    <name type="ordered locus">LPC_2401</name>
</gene>
<dbReference type="EC" id="1.14.13.9" evidence="1"/>
<dbReference type="EMBL" id="CP000675">
    <property type="protein sequence ID" value="ABQ56323.1"/>
    <property type="molecule type" value="Genomic_DNA"/>
</dbReference>
<dbReference type="RefSeq" id="WP_011945995.1">
    <property type="nucleotide sequence ID" value="NC_009494.2"/>
</dbReference>
<dbReference type="SMR" id="A5IG23"/>
<dbReference type="KEGG" id="lpc:LPC_2401"/>
<dbReference type="HOGENOM" id="CLU_023210_0_1_6"/>
<dbReference type="UniPathway" id="UPA00253">
    <property type="reaction ID" value="UER00328"/>
</dbReference>
<dbReference type="GO" id="GO:0071949">
    <property type="term" value="F:FAD binding"/>
    <property type="evidence" value="ECO:0007669"/>
    <property type="project" value="InterPro"/>
</dbReference>
<dbReference type="GO" id="GO:0004502">
    <property type="term" value="F:kynurenine 3-monooxygenase activity"/>
    <property type="evidence" value="ECO:0007669"/>
    <property type="project" value="UniProtKB-UniRule"/>
</dbReference>
<dbReference type="GO" id="GO:0043420">
    <property type="term" value="P:anthranilate metabolic process"/>
    <property type="evidence" value="ECO:0007669"/>
    <property type="project" value="UniProtKB-UniRule"/>
</dbReference>
<dbReference type="GO" id="GO:0070189">
    <property type="term" value="P:kynurenine metabolic process"/>
    <property type="evidence" value="ECO:0007669"/>
    <property type="project" value="TreeGrafter"/>
</dbReference>
<dbReference type="GO" id="GO:0006569">
    <property type="term" value="P:L-tryptophan catabolic process"/>
    <property type="evidence" value="ECO:0007669"/>
    <property type="project" value="UniProtKB-UniRule"/>
</dbReference>
<dbReference type="GO" id="GO:0009435">
    <property type="term" value="P:NAD biosynthetic process"/>
    <property type="evidence" value="ECO:0007669"/>
    <property type="project" value="UniProtKB-UniPathway"/>
</dbReference>
<dbReference type="GO" id="GO:0019805">
    <property type="term" value="P:quinolinate biosynthetic process"/>
    <property type="evidence" value="ECO:0007669"/>
    <property type="project" value="UniProtKB-UniRule"/>
</dbReference>
<dbReference type="FunFam" id="3.50.50.60:FF:000185">
    <property type="entry name" value="Kynurenine 3-monooxygenase"/>
    <property type="match status" value="1"/>
</dbReference>
<dbReference type="Gene3D" id="3.50.50.60">
    <property type="entry name" value="FAD/NAD(P)-binding domain"/>
    <property type="match status" value="1"/>
</dbReference>
<dbReference type="HAMAP" id="MF_01971">
    <property type="entry name" value="Kynurenine_monooxygenase"/>
    <property type="match status" value="1"/>
</dbReference>
<dbReference type="InterPro" id="IPR002938">
    <property type="entry name" value="FAD-bd"/>
</dbReference>
<dbReference type="InterPro" id="IPR036188">
    <property type="entry name" value="FAD/NAD-bd_sf"/>
</dbReference>
<dbReference type="InterPro" id="IPR027545">
    <property type="entry name" value="Kynurenine_monooxygenase"/>
</dbReference>
<dbReference type="PANTHER" id="PTHR46028">
    <property type="entry name" value="KYNURENINE 3-MONOOXYGENASE"/>
    <property type="match status" value="1"/>
</dbReference>
<dbReference type="PANTHER" id="PTHR46028:SF2">
    <property type="entry name" value="KYNURENINE 3-MONOOXYGENASE"/>
    <property type="match status" value="1"/>
</dbReference>
<dbReference type="Pfam" id="PF01494">
    <property type="entry name" value="FAD_binding_3"/>
    <property type="match status" value="1"/>
</dbReference>
<dbReference type="PRINTS" id="PR00420">
    <property type="entry name" value="RNGMNOXGNASE"/>
</dbReference>
<dbReference type="SUPFAM" id="SSF51905">
    <property type="entry name" value="FAD/NAD(P)-binding domain"/>
    <property type="match status" value="1"/>
</dbReference>
<protein>
    <recommendedName>
        <fullName evidence="1">Kynurenine 3-monooxygenase</fullName>
        <ecNumber evidence="1">1.14.13.9</ecNumber>
    </recommendedName>
    <alternativeName>
        <fullName evidence="1">Kynurenine 3-hydroxylase</fullName>
    </alternativeName>
</protein>
<accession>A5IG23</accession>
<name>KMO_LEGPC</name>
<sequence>MKHITIIGAGLAGTLCGLYLARRGYEVELFESRPDIRNSPTDYGRSINLALSCRGITALKAMNLLSEVNKIMVPMRARAIHEANGEVHYQPFGRHIDEYINAISRSDLNALLLNKAELCPNIKLHFNMKLHSLDIHNKKIKFENKNGDFVEASYHRLIGADGAPSHVRDMLKNEGIVSASRDFLSHGYKELSISKKHTKGMAREHLHLWPRDSFMLLGNPNPDDSITGSLFLANEGKDSFAELNNEEKLHLFFKTQFPDAYAAMPNLVQEFFGNPTGHLSTIQCSPWYYKDECLLIGDAAHGIIPFFGQGMNSAFEDCRILDELLDEYQDDWSRVTPVFYEQRKVNTDAIAKMSMDNYHEIHSDIRNPKFILQKQIERELMLRYPEHYVSMHVLVMFTNTPYAKAMAIGELQSGLLEQICFPITDIKELNWQEVEKLLSIYDKKLAKII</sequence>
<reference key="1">
    <citation type="submission" date="2006-11" db="EMBL/GenBank/DDBJ databases">
        <title>Identification and characterization of a new conjugation/ type IVA secretion system (trb/tra) of L. pneumophila Corby localized on a mobile genomic island.</title>
        <authorList>
            <person name="Gloeckner G."/>
            <person name="Albert-Weissenberger C."/>
            <person name="Weinmann E."/>
            <person name="Jacobi S."/>
            <person name="Schunder E."/>
            <person name="Steinert M."/>
            <person name="Buchrieser C."/>
            <person name="Hacker J."/>
            <person name="Heuner K."/>
        </authorList>
    </citation>
    <scope>NUCLEOTIDE SEQUENCE [LARGE SCALE GENOMIC DNA]</scope>
    <source>
        <strain>Corby</strain>
    </source>
</reference>
<organism>
    <name type="scientific">Legionella pneumophila (strain Corby)</name>
    <dbReference type="NCBI Taxonomy" id="400673"/>
    <lineage>
        <taxon>Bacteria</taxon>
        <taxon>Pseudomonadati</taxon>
        <taxon>Pseudomonadota</taxon>
        <taxon>Gammaproteobacteria</taxon>
        <taxon>Legionellales</taxon>
        <taxon>Legionellaceae</taxon>
        <taxon>Legionella</taxon>
    </lineage>
</organism>